<keyword id="KW-0120">Carbon dioxide fixation</keyword>
<keyword id="KW-0456">Lyase</keyword>
<keyword id="KW-0460">Magnesium</keyword>
<keyword id="KW-1185">Reference proteome</keyword>
<feature type="chain" id="PRO_1000072621" description="Phosphoenolpyruvate carboxylase">
    <location>
        <begin position="1"/>
        <end position="931"/>
    </location>
</feature>
<feature type="active site" evidence="1">
    <location>
        <position position="158"/>
    </location>
</feature>
<feature type="active site" evidence="1">
    <location>
        <position position="593"/>
    </location>
</feature>
<protein>
    <recommendedName>
        <fullName evidence="1">Phosphoenolpyruvate carboxylase</fullName>
        <shortName evidence="1">PEPC</shortName>
        <shortName evidence="1">PEPCase</shortName>
        <ecNumber evidence="1">4.1.1.31</ecNumber>
    </recommendedName>
</protein>
<name>CAPP_AZOC5</name>
<accession>A8I060</accession>
<organism>
    <name type="scientific">Azorhizobium caulinodans (strain ATCC 43989 / DSM 5975 / JCM 20966 / LMG 6465 / NBRC 14845 / NCIMB 13405 / ORS 571)</name>
    <dbReference type="NCBI Taxonomy" id="438753"/>
    <lineage>
        <taxon>Bacteria</taxon>
        <taxon>Pseudomonadati</taxon>
        <taxon>Pseudomonadota</taxon>
        <taxon>Alphaproteobacteria</taxon>
        <taxon>Hyphomicrobiales</taxon>
        <taxon>Xanthobacteraceae</taxon>
        <taxon>Azorhizobium</taxon>
    </lineage>
</organism>
<reference key="1">
    <citation type="submission" date="2007-04" db="EMBL/GenBank/DDBJ databases">
        <title>Complete genome sequence of the nitrogen-fixing bacterium Azorhizobium caulinodans ORS571.</title>
        <authorList>
            <person name="Lee K.B."/>
            <person name="Backer P.D."/>
            <person name="Aono T."/>
            <person name="Liu C.T."/>
            <person name="Suzuki S."/>
            <person name="Suzuki T."/>
            <person name="Kaneko T."/>
            <person name="Yamada M."/>
            <person name="Tabata S."/>
            <person name="Kupfer D.M."/>
            <person name="Najar F.Z."/>
            <person name="Wiley G.B."/>
            <person name="Roe B."/>
            <person name="Binnewies T."/>
            <person name="Ussery D."/>
            <person name="Vereecke D."/>
            <person name="Gevers D."/>
            <person name="Holsters M."/>
            <person name="Oyaizu H."/>
        </authorList>
    </citation>
    <scope>NUCLEOTIDE SEQUENCE [LARGE SCALE GENOMIC DNA]</scope>
    <source>
        <strain>ATCC 43989 / DSM 5975 / JCM 20966 / LMG 6465 / NBRC 14845 / NCIMB 13405 / ORS 571</strain>
    </source>
</reference>
<comment type="function">
    <text evidence="1">Forms oxaloacetate, a four-carbon dicarboxylic acid source for the tricarboxylic acid cycle.</text>
</comment>
<comment type="catalytic activity">
    <reaction evidence="1">
        <text>oxaloacetate + phosphate = phosphoenolpyruvate + hydrogencarbonate</text>
        <dbReference type="Rhea" id="RHEA:28370"/>
        <dbReference type="ChEBI" id="CHEBI:16452"/>
        <dbReference type="ChEBI" id="CHEBI:17544"/>
        <dbReference type="ChEBI" id="CHEBI:43474"/>
        <dbReference type="ChEBI" id="CHEBI:58702"/>
        <dbReference type="EC" id="4.1.1.31"/>
    </reaction>
</comment>
<comment type="cofactor">
    <cofactor evidence="1">
        <name>Mg(2+)</name>
        <dbReference type="ChEBI" id="CHEBI:18420"/>
    </cofactor>
</comment>
<comment type="similarity">
    <text evidence="1">Belongs to the PEPCase type 1 family.</text>
</comment>
<evidence type="ECO:0000255" key="1">
    <source>
        <dbReference type="HAMAP-Rule" id="MF_00595"/>
    </source>
</evidence>
<proteinExistence type="inferred from homology"/>
<gene>
    <name evidence="1" type="primary">ppc</name>
    <name type="ordered locus">AZC_4669</name>
</gene>
<sequence length="931" mass="102788">MTSAVWAVVSEQEAGGPDKDQPLRDDIRLLGRILGDTVREQEGDAIYELVETIRQTSIRFHRDADEAARQELNALLESMTPEVAVQIIRAFSYFSHLANIAEDQHHSRRNRAHAVAGSAPRPGTLANALARAEKAGIGAAELRAFFDAALVSPVLTAHPTEVRRKSTMNREMEIADLLDLKERLQATPQEAREQDEKLRRAVLTLWQTALLRKFKLTVLDEVQNGLSYYDYTFLAEVPRLLCALEDHLAEQEGGEPGAELPPFLRIGSWIGGDRDGNPFVTADVLRETVRQHRDRVMAFYLEQVGLLVTELSLAKRLVAVSEDLTALAERSGDRAPEHREEPYRLALVGIHNRLKATVAAQKAADDGKTMGAAEDGHLPYPDAAAFRADLDILYRSLMANGSAILARGRLRHVRRAVDSFGFHLASLDLRQNSDVHERTVADLLEQAAPGTNYHALDEEARIAVLRAELTNPRPLASPFLSYTEETRSELAILRTAAEAHARLGKTVIPNAIISKAEGISDMLELALLLKEVGLVSATGESAINVIPLFETIGDLQACGPVMDRLLALPEYRALVDSRGGEQEVMLGYSDSNKDGGFVSSGWELYKAEIALIEVFARHKVKLRLFHGRGGSVGRGGGPSYDAILAQPAGAVSGQIRITEQGEIISSKYSNPENGRRNLEILVSATLESTLLEAEQASPRPEFLAAMEELSKTAFTAYRSLVYETPGFEDYFWSSTVISEIATLNIGSRPASRNKTRAIEALRAIPWVFSWSQCRLMLPGWYGFGTAIAAFVEARPVDGIAFLQSMYREWPFFRTLLSNMDMVLSKSSLAVASRYAELVPDEELRTRIFSRISAEYQSAITSLLAIMGQKKLLEANPLLDRSIRNRFPYLDPLNHIQVELLKLHRSDAGSDHVLHGIQLTINGISAGLRNSG</sequence>
<dbReference type="EC" id="4.1.1.31" evidence="1"/>
<dbReference type="EMBL" id="AP009384">
    <property type="protein sequence ID" value="BAF90667.1"/>
    <property type="molecule type" value="Genomic_DNA"/>
</dbReference>
<dbReference type="RefSeq" id="WP_012173188.1">
    <property type="nucleotide sequence ID" value="NC_009937.1"/>
</dbReference>
<dbReference type="SMR" id="A8I060"/>
<dbReference type="STRING" id="438753.AZC_4669"/>
<dbReference type="KEGG" id="azc:AZC_4669"/>
<dbReference type="eggNOG" id="COG2352">
    <property type="taxonomic scope" value="Bacteria"/>
</dbReference>
<dbReference type="HOGENOM" id="CLU_006557_2_0_5"/>
<dbReference type="Proteomes" id="UP000000270">
    <property type="component" value="Chromosome"/>
</dbReference>
<dbReference type="GO" id="GO:0005829">
    <property type="term" value="C:cytosol"/>
    <property type="evidence" value="ECO:0007669"/>
    <property type="project" value="TreeGrafter"/>
</dbReference>
<dbReference type="GO" id="GO:0000287">
    <property type="term" value="F:magnesium ion binding"/>
    <property type="evidence" value="ECO:0007669"/>
    <property type="project" value="UniProtKB-UniRule"/>
</dbReference>
<dbReference type="GO" id="GO:0008964">
    <property type="term" value="F:phosphoenolpyruvate carboxylase activity"/>
    <property type="evidence" value="ECO:0007669"/>
    <property type="project" value="UniProtKB-UniRule"/>
</dbReference>
<dbReference type="GO" id="GO:0015977">
    <property type="term" value="P:carbon fixation"/>
    <property type="evidence" value="ECO:0007669"/>
    <property type="project" value="UniProtKB-UniRule"/>
</dbReference>
<dbReference type="GO" id="GO:0006107">
    <property type="term" value="P:oxaloacetate metabolic process"/>
    <property type="evidence" value="ECO:0007669"/>
    <property type="project" value="UniProtKB-UniRule"/>
</dbReference>
<dbReference type="GO" id="GO:0006099">
    <property type="term" value="P:tricarboxylic acid cycle"/>
    <property type="evidence" value="ECO:0007669"/>
    <property type="project" value="InterPro"/>
</dbReference>
<dbReference type="Gene3D" id="1.20.1440.90">
    <property type="entry name" value="Phosphoenolpyruvate/pyruvate domain"/>
    <property type="match status" value="1"/>
</dbReference>
<dbReference type="HAMAP" id="MF_00595">
    <property type="entry name" value="PEPcase_type1"/>
    <property type="match status" value="1"/>
</dbReference>
<dbReference type="InterPro" id="IPR021135">
    <property type="entry name" value="PEP_COase"/>
</dbReference>
<dbReference type="InterPro" id="IPR022805">
    <property type="entry name" value="PEP_COase_bac/pln-type"/>
</dbReference>
<dbReference type="InterPro" id="IPR018129">
    <property type="entry name" value="PEP_COase_Lys_AS"/>
</dbReference>
<dbReference type="InterPro" id="IPR033129">
    <property type="entry name" value="PEPCASE_His_AS"/>
</dbReference>
<dbReference type="InterPro" id="IPR015813">
    <property type="entry name" value="Pyrv/PenolPyrv_kinase-like_dom"/>
</dbReference>
<dbReference type="NCBIfam" id="NF000584">
    <property type="entry name" value="PRK00009.1"/>
    <property type="match status" value="1"/>
</dbReference>
<dbReference type="PANTHER" id="PTHR30523">
    <property type="entry name" value="PHOSPHOENOLPYRUVATE CARBOXYLASE"/>
    <property type="match status" value="1"/>
</dbReference>
<dbReference type="PANTHER" id="PTHR30523:SF6">
    <property type="entry name" value="PHOSPHOENOLPYRUVATE CARBOXYLASE"/>
    <property type="match status" value="1"/>
</dbReference>
<dbReference type="Pfam" id="PF00311">
    <property type="entry name" value="PEPcase"/>
    <property type="match status" value="1"/>
</dbReference>
<dbReference type="PRINTS" id="PR00150">
    <property type="entry name" value="PEPCARBXLASE"/>
</dbReference>
<dbReference type="SUPFAM" id="SSF51621">
    <property type="entry name" value="Phosphoenolpyruvate/pyruvate domain"/>
    <property type="match status" value="1"/>
</dbReference>
<dbReference type="PROSITE" id="PS00781">
    <property type="entry name" value="PEPCASE_1"/>
    <property type="match status" value="1"/>
</dbReference>
<dbReference type="PROSITE" id="PS00393">
    <property type="entry name" value="PEPCASE_2"/>
    <property type="match status" value="1"/>
</dbReference>